<reference key="1">
    <citation type="journal article" date="2002" name="Proc. Natl. Acad. Sci. U.S.A.">
        <title>The genome sequence of the facultative intracellular pathogen Brucella melitensis.</title>
        <authorList>
            <person name="DelVecchio V.G."/>
            <person name="Kapatral V."/>
            <person name="Redkar R.J."/>
            <person name="Patra G."/>
            <person name="Mujer C."/>
            <person name="Los T."/>
            <person name="Ivanova N."/>
            <person name="Anderson I."/>
            <person name="Bhattacharyya A."/>
            <person name="Lykidis A."/>
            <person name="Reznik G."/>
            <person name="Jablonski L."/>
            <person name="Larsen N."/>
            <person name="D'Souza M."/>
            <person name="Bernal A."/>
            <person name="Mazur M."/>
            <person name="Goltsman E."/>
            <person name="Selkov E."/>
            <person name="Elzer P.H."/>
            <person name="Hagius S."/>
            <person name="O'Callaghan D."/>
            <person name="Letesson J.-J."/>
            <person name="Haselkorn R."/>
            <person name="Kyrpides N.C."/>
            <person name="Overbeek R."/>
        </authorList>
    </citation>
    <scope>NUCLEOTIDE SEQUENCE [LARGE SCALE GENOMIC DNA]</scope>
    <source>
        <strain>ATCC 23456 / CCUG 17765 / NCTC 10094 / 16M</strain>
    </source>
</reference>
<name>MINE_BRUME</name>
<proteinExistence type="inferred from homology"/>
<keyword id="KW-0131">Cell cycle</keyword>
<keyword id="KW-0132">Cell division</keyword>
<dbReference type="EMBL" id="AE008918">
    <property type="protein sequence ID" value="AAL54167.1"/>
    <property type="molecule type" value="Genomic_DNA"/>
</dbReference>
<dbReference type="PIR" id="AD3625">
    <property type="entry name" value="AD3625"/>
</dbReference>
<dbReference type="RefSeq" id="WP_002966267.1">
    <property type="nucleotide sequence ID" value="NZ_GG703779.1"/>
</dbReference>
<dbReference type="SMR" id="P65361"/>
<dbReference type="GeneID" id="97535514"/>
<dbReference type="KEGG" id="bme:BMEII0925"/>
<dbReference type="KEGG" id="bmel:DK63_2326"/>
<dbReference type="PATRIC" id="fig|224914.52.peg.2437"/>
<dbReference type="eggNOG" id="COG0851">
    <property type="taxonomic scope" value="Bacteria"/>
</dbReference>
<dbReference type="Proteomes" id="UP000000419">
    <property type="component" value="Chromosome II"/>
</dbReference>
<dbReference type="GO" id="GO:0051301">
    <property type="term" value="P:cell division"/>
    <property type="evidence" value="ECO:0007669"/>
    <property type="project" value="UniProtKB-KW"/>
</dbReference>
<dbReference type="GO" id="GO:0032955">
    <property type="term" value="P:regulation of division septum assembly"/>
    <property type="evidence" value="ECO:0007669"/>
    <property type="project" value="InterPro"/>
</dbReference>
<dbReference type="Gene3D" id="3.30.1070.10">
    <property type="entry name" value="Cell division topological specificity factor MinE"/>
    <property type="match status" value="1"/>
</dbReference>
<dbReference type="HAMAP" id="MF_00262">
    <property type="entry name" value="MinE"/>
    <property type="match status" value="1"/>
</dbReference>
<dbReference type="InterPro" id="IPR005527">
    <property type="entry name" value="MinE"/>
</dbReference>
<dbReference type="InterPro" id="IPR036707">
    <property type="entry name" value="MinE_sf"/>
</dbReference>
<dbReference type="NCBIfam" id="TIGR01215">
    <property type="entry name" value="minE"/>
    <property type="match status" value="1"/>
</dbReference>
<dbReference type="NCBIfam" id="NF001422">
    <property type="entry name" value="PRK00296.1"/>
    <property type="match status" value="1"/>
</dbReference>
<dbReference type="Pfam" id="PF03776">
    <property type="entry name" value="MinE"/>
    <property type="match status" value="1"/>
</dbReference>
<dbReference type="SUPFAM" id="SSF55229">
    <property type="entry name" value="Cell division protein MinE topological specificity domain"/>
    <property type="match status" value="1"/>
</dbReference>
<gene>
    <name evidence="1" type="primary">minE</name>
    <name type="ordered locus">BMEII0925</name>
</gene>
<protein>
    <recommendedName>
        <fullName evidence="1">Cell division topological specificity factor</fullName>
    </recommendedName>
</protein>
<evidence type="ECO:0000255" key="1">
    <source>
        <dbReference type="HAMAP-Rule" id="MF_00262"/>
    </source>
</evidence>
<accession>P65361</accession>
<accession>Q8FWX0</accession>
<accession>Q8YBH5</accession>
<comment type="function">
    <text evidence="1">Prevents the cell division inhibition by proteins MinC and MinD at internal division sites while permitting inhibition at polar sites. This ensures cell division at the proper site by restricting the formation of a division septum at the midpoint of the long axis of the cell.</text>
</comment>
<comment type="similarity">
    <text evidence="1">Belongs to the MinE family.</text>
</comment>
<sequence length="90" mass="10089">MSIFRFFTRQQASAPQARERLQVLLAHERASYGGQSDLVAVLREEILAVIAKHIKVDREKVSVKMDRGDQVSTLEVDIELPLTAKKGRAA</sequence>
<feature type="chain" id="PRO_0000205868" description="Cell division topological specificity factor">
    <location>
        <begin position="1"/>
        <end position="90"/>
    </location>
</feature>
<organism>
    <name type="scientific">Brucella melitensis biotype 1 (strain ATCC 23456 / CCUG 17765 / NCTC 10094 / 16M)</name>
    <dbReference type="NCBI Taxonomy" id="224914"/>
    <lineage>
        <taxon>Bacteria</taxon>
        <taxon>Pseudomonadati</taxon>
        <taxon>Pseudomonadota</taxon>
        <taxon>Alphaproteobacteria</taxon>
        <taxon>Hyphomicrobiales</taxon>
        <taxon>Brucellaceae</taxon>
        <taxon>Brucella/Ochrobactrum group</taxon>
        <taxon>Brucella</taxon>
    </lineage>
</organism>